<gene>
    <name type="primary">PLA2G7</name>
</gene>
<feature type="signal peptide" evidence="1">
    <location>
        <begin position="1"/>
        <end position="21"/>
    </location>
</feature>
<feature type="chain" id="PRO_0000017830" description="Platelet-activating factor acetylhydrolase">
    <location>
        <begin position="22"/>
        <end position="444"/>
    </location>
</feature>
<feature type="active site" description="Nucleophile" evidence="1">
    <location>
        <position position="274"/>
    </location>
</feature>
<feature type="active site" description="Charge relay system" evidence="4">
    <location>
        <position position="297"/>
    </location>
</feature>
<feature type="active site" description="Charge relay system" evidence="4">
    <location>
        <position position="352"/>
    </location>
</feature>
<feature type="glycosylation site" description="N-linked (GlcNAc...) asparagine" evidence="3">
    <location>
        <position position="60"/>
    </location>
</feature>
<feature type="glycosylation site" description="N-linked (GlcNAc...) asparagine" evidence="3">
    <location>
        <position position="200"/>
    </location>
</feature>
<feature type="glycosylation site" description="N-linked (GlcNAc...) asparagine" evidence="3">
    <location>
        <position position="424"/>
    </location>
</feature>
<feature type="glycosylation site" description="N-linked (GlcNAc...) asparagine" evidence="3">
    <location>
        <position position="434"/>
    </location>
</feature>
<organism>
    <name type="scientific">Bos taurus</name>
    <name type="common">Bovine</name>
    <dbReference type="NCBI Taxonomy" id="9913"/>
    <lineage>
        <taxon>Eukaryota</taxon>
        <taxon>Metazoa</taxon>
        <taxon>Chordata</taxon>
        <taxon>Craniata</taxon>
        <taxon>Vertebrata</taxon>
        <taxon>Euteleostomi</taxon>
        <taxon>Mammalia</taxon>
        <taxon>Eutheria</taxon>
        <taxon>Laurasiatheria</taxon>
        <taxon>Artiodactyla</taxon>
        <taxon>Ruminantia</taxon>
        <taxon>Pecora</taxon>
        <taxon>Bovidae</taxon>
        <taxon>Bovinae</taxon>
        <taxon>Bos</taxon>
    </lineage>
</organism>
<accession>Q28017</accession>
<name>PAFA_BOVIN</name>
<reference key="1">
    <citation type="journal article" date="1995" name="J. Biol. Chem.">
        <title>Plasma platelet-activating factor acetylhydrolase is a secreted phospholipase A2 with a catalytic triad.</title>
        <authorList>
            <person name="Tjoelker L.W."/>
            <person name="Eberhardt C."/>
            <person name="Unger J."/>
            <person name="le Trong H."/>
            <person name="Zimmerman G.A."/>
            <person name="McIntyre T.M."/>
            <person name="Stafforini D.M."/>
            <person name="Prescott S.M."/>
            <person name="Gray P.W."/>
        </authorList>
    </citation>
    <scope>NUCLEOTIDE SEQUENCE [MRNA]</scope>
    <source>
        <tissue>Spleen</tissue>
    </source>
</reference>
<evidence type="ECO:0000250" key="1"/>
<evidence type="ECO:0000250" key="2">
    <source>
        <dbReference type="UniProtKB" id="Q13093"/>
    </source>
</evidence>
<evidence type="ECO:0000255" key="3"/>
<evidence type="ECO:0000255" key="4">
    <source>
        <dbReference type="PROSITE-ProRule" id="PRU10037"/>
    </source>
</evidence>
<evidence type="ECO:0000305" key="5"/>
<protein>
    <recommendedName>
        <fullName>Platelet-activating factor acetylhydrolase</fullName>
        <shortName>PAF acetylhydrolase</shortName>
        <ecNumber evidence="2">3.1.1.47</ecNumber>
    </recommendedName>
    <alternativeName>
        <fullName>1-alkyl-2-acetylglycerophosphocholine esterase</fullName>
    </alternativeName>
    <alternativeName>
        <fullName>2-acetyl-1-alkylglycerophosphocholine esterase</fullName>
    </alternativeName>
    <alternativeName>
        <fullName>LDL-associated phospholipase A2</fullName>
        <shortName>LDL-PLA(2)</shortName>
    </alternativeName>
    <alternativeName>
        <fullName>PAF 2-acylhydrolase</fullName>
    </alternativeName>
</protein>
<comment type="function">
    <text evidence="2">Lipoprotein-associated calcium-independent phospholipase A2 involved in phospholipid catabolism during inflammatory and oxidative stress response (By similarity). At the lipid-aqueous interface, hydrolyzes the ester bond of fatty acyl group attached at sn-2 position of phospholipids (phospholipase A2 activity) (By similarity). Specifically targets phospholipids with a short-chain fatty acyl group at sn-2 position. Can hydrolyze phospholipids with long fatty acyl chains, only if they carry oxidized functional groups (By similarity). Hydrolyzes and inactivates platelet-activating factor (PAF, 1-O-alkyl-2-acetyl-sn-glycero-3-phosphocholine), a potent pro-inflammatory signaling lipid that acts through PTAFR on various innate immune cells (By similarity). Hydrolyzes oxidatively truncated phospholipids carrying an aldehyde group at omega position, preventing their accumulation in low-density lipoprotein (LDL) particles and uncontrolled pro-inflammatory effects (By similarity). As part of high-density lipoprotein (HDL) particles, can hydrolyze phospholipids having long-chain fatty acyl hydroperoxides at sn-2 position and protect against potential accumulation of these oxylipins in the vascular wall (By similarity). Catalyzes the release from membrane phospholipids of F2-isoprostanes, lipid biomarkers of cellular oxidative damage (By similarity).</text>
</comment>
<comment type="catalytic activity">
    <reaction evidence="2">
        <text>a 1-O-alkyl-2-acetyl-sn-glycero-3-phosphocholine + H2O = a 1-O-alkyl-sn-glycero-3-phosphocholine + acetate + H(+)</text>
        <dbReference type="Rhea" id="RHEA:17777"/>
        <dbReference type="ChEBI" id="CHEBI:15377"/>
        <dbReference type="ChEBI" id="CHEBI:15378"/>
        <dbReference type="ChEBI" id="CHEBI:30089"/>
        <dbReference type="ChEBI" id="CHEBI:30909"/>
        <dbReference type="ChEBI" id="CHEBI:36707"/>
        <dbReference type="EC" id="3.1.1.47"/>
    </reaction>
    <physiologicalReaction direction="left-to-right" evidence="2">
        <dbReference type="Rhea" id="RHEA:17778"/>
    </physiologicalReaction>
</comment>
<comment type="catalytic activity">
    <reaction evidence="2">
        <text>1-O-decyl-2-acetyl-sn-glycero-3-phosphocholine + H2O = 1-O-decyl-sn-glycero-3-phosphocholine + acetate + H(+)</text>
        <dbReference type="Rhea" id="RHEA:41376"/>
        <dbReference type="ChEBI" id="CHEBI:15377"/>
        <dbReference type="ChEBI" id="CHEBI:15378"/>
        <dbReference type="ChEBI" id="CHEBI:30089"/>
        <dbReference type="ChEBI" id="CHEBI:78108"/>
        <dbReference type="ChEBI" id="CHEBI:78109"/>
    </reaction>
    <physiologicalReaction direction="left-to-right" evidence="2">
        <dbReference type="Rhea" id="RHEA:41377"/>
    </physiologicalReaction>
</comment>
<comment type="catalytic activity">
    <reaction evidence="2">
        <text>1-O-dodecyl-2-acetyl-sn-glycero-3-phosphocholine + H2O = 1-O-dodecyl-sn-glycero-3-phosphocholine + acetate + H(+)</text>
        <dbReference type="Rhea" id="RHEA:41372"/>
        <dbReference type="ChEBI" id="CHEBI:15377"/>
        <dbReference type="ChEBI" id="CHEBI:15378"/>
        <dbReference type="ChEBI" id="CHEBI:30089"/>
        <dbReference type="ChEBI" id="CHEBI:78103"/>
        <dbReference type="ChEBI" id="CHEBI:78104"/>
    </reaction>
    <physiologicalReaction direction="left-to-right" evidence="2">
        <dbReference type="Rhea" id="RHEA:41373"/>
    </physiologicalReaction>
</comment>
<comment type="catalytic activity">
    <reaction evidence="2">
        <text>1-O-tetradecyl-2-acetyl-sn-glycero-3-phosphocholine + H2O = 1-O-tetradecyl-sn-glycero-3-phosphocholine + acetate + H(+)</text>
        <dbReference type="Rhea" id="RHEA:41368"/>
        <dbReference type="ChEBI" id="CHEBI:15377"/>
        <dbReference type="ChEBI" id="CHEBI:15378"/>
        <dbReference type="ChEBI" id="CHEBI:30089"/>
        <dbReference type="ChEBI" id="CHEBI:78101"/>
        <dbReference type="ChEBI" id="CHEBI:78102"/>
    </reaction>
    <physiologicalReaction direction="left-to-right" evidence="2">
        <dbReference type="Rhea" id="RHEA:41369"/>
    </physiologicalReaction>
</comment>
<comment type="catalytic activity">
    <reaction evidence="2">
        <text>1-O-hexadecyl-2-acetyl-sn-glycero-3-phosphocholine + H2O = 1-O-hexadecyl-sn-glycero-3-phosphocholine + acetate + H(+)</text>
        <dbReference type="Rhea" id="RHEA:40479"/>
        <dbReference type="ChEBI" id="CHEBI:15377"/>
        <dbReference type="ChEBI" id="CHEBI:15378"/>
        <dbReference type="ChEBI" id="CHEBI:30089"/>
        <dbReference type="ChEBI" id="CHEBI:44811"/>
        <dbReference type="ChEBI" id="CHEBI:64496"/>
    </reaction>
    <physiologicalReaction direction="left-to-right" evidence="2">
        <dbReference type="Rhea" id="RHEA:40480"/>
    </physiologicalReaction>
</comment>
<comment type="catalytic activity">
    <reaction evidence="2">
        <text>1-O-octadecyl-2-acetyl-sn-glycero-3-phosphocholine + H2O = 1-O-octadecyl-sn-glycero-3-phosphocholine + acetate + H(+)</text>
        <dbReference type="Rhea" id="RHEA:41183"/>
        <dbReference type="ChEBI" id="CHEBI:15377"/>
        <dbReference type="ChEBI" id="CHEBI:15378"/>
        <dbReference type="ChEBI" id="CHEBI:30089"/>
        <dbReference type="ChEBI" id="CHEBI:52450"/>
        <dbReference type="ChEBI" id="CHEBI:75216"/>
    </reaction>
    <physiologicalReaction direction="left-to-right" evidence="2">
        <dbReference type="Rhea" id="RHEA:41184"/>
    </physiologicalReaction>
</comment>
<comment type="catalytic activity">
    <reaction evidence="2">
        <text>1-hexadecanoyl-2-acetyl-sn-glycero-3-phosphocholine + H2O = 1-hexadecanoyl-sn-glycero-3-phosphocholine + acetate + H(+)</text>
        <dbReference type="Rhea" id="RHEA:41203"/>
        <dbReference type="ChEBI" id="CHEBI:15377"/>
        <dbReference type="ChEBI" id="CHEBI:15378"/>
        <dbReference type="ChEBI" id="CHEBI:30089"/>
        <dbReference type="ChEBI" id="CHEBI:72998"/>
        <dbReference type="ChEBI" id="CHEBI:75219"/>
    </reaction>
    <physiologicalReaction direction="left-to-right" evidence="2">
        <dbReference type="Rhea" id="RHEA:41204"/>
    </physiologicalReaction>
</comment>
<comment type="catalytic activity">
    <reaction evidence="2">
        <text>1-hexadecanoyl-2-propionyl-sn-glycero-3-phosphocholine + H2O = propanoate + 1-hexadecanoyl-sn-glycero-3-phosphocholine + H(+)</text>
        <dbReference type="Rhea" id="RHEA:41191"/>
        <dbReference type="ChEBI" id="CHEBI:15377"/>
        <dbReference type="ChEBI" id="CHEBI:15378"/>
        <dbReference type="ChEBI" id="CHEBI:17272"/>
        <dbReference type="ChEBI" id="CHEBI:72998"/>
        <dbReference type="ChEBI" id="CHEBI:77831"/>
    </reaction>
    <physiologicalReaction direction="left-to-right" evidence="2">
        <dbReference type="Rhea" id="RHEA:41192"/>
    </physiologicalReaction>
</comment>
<comment type="catalytic activity">
    <reaction evidence="2">
        <text>1-hexadecanoyl-2-butanoyl-sn-glycero-3-phosphocholine + H2O = butanoate + 1-hexadecanoyl-sn-glycero-3-phosphocholine + H(+)</text>
        <dbReference type="Rhea" id="RHEA:41195"/>
        <dbReference type="ChEBI" id="CHEBI:15377"/>
        <dbReference type="ChEBI" id="CHEBI:15378"/>
        <dbReference type="ChEBI" id="CHEBI:17968"/>
        <dbReference type="ChEBI" id="CHEBI:72998"/>
        <dbReference type="ChEBI" id="CHEBI:77832"/>
    </reaction>
    <physiologicalReaction direction="left-to-right" evidence="2">
        <dbReference type="Rhea" id="RHEA:41196"/>
    </physiologicalReaction>
</comment>
<comment type="catalytic activity">
    <reaction evidence="2">
        <text>1-hexadecanoyl-2-pentanoyl-sn-glycero-3-phosphocholine + H2O = pentanoate + 1-hexadecanoyl-sn-glycero-3-phosphocholine + H(+)</text>
        <dbReference type="Rhea" id="RHEA:41199"/>
        <dbReference type="ChEBI" id="CHEBI:15377"/>
        <dbReference type="ChEBI" id="CHEBI:15378"/>
        <dbReference type="ChEBI" id="CHEBI:31011"/>
        <dbReference type="ChEBI" id="CHEBI:72998"/>
        <dbReference type="ChEBI" id="CHEBI:77833"/>
    </reaction>
    <physiologicalReaction direction="left-to-right" evidence="2">
        <dbReference type="Rhea" id="RHEA:41200"/>
    </physiologicalReaction>
</comment>
<comment type="catalytic activity">
    <reaction evidence="2">
        <text>1-hexadecanoyl-2-glutaroyl-sn-glycero-3-phosphocholine + H2O = glutarate + 1-hexadecanoyl-sn-glycero-3-phosphocholine + H(+)</text>
        <dbReference type="Rhea" id="RHEA:41159"/>
        <dbReference type="ChEBI" id="CHEBI:15377"/>
        <dbReference type="ChEBI" id="CHEBI:15378"/>
        <dbReference type="ChEBI" id="CHEBI:30921"/>
        <dbReference type="ChEBI" id="CHEBI:72998"/>
        <dbReference type="ChEBI" id="CHEBI:77756"/>
    </reaction>
    <physiologicalReaction direction="left-to-right" evidence="2">
        <dbReference type="Rhea" id="RHEA:41160"/>
    </physiologicalReaction>
</comment>
<comment type="catalytic activity">
    <reaction evidence="2">
        <text>1-hexadecanoyl-2-(5-oxopentanoyl)-sn-glycero-3-phosphocholine + H2O = 5-oxopentanoate + 1-hexadecanoyl-sn-glycero-3-phosphocholine + H(+)</text>
        <dbReference type="Rhea" id="RHEA:40483"/>
        <dbReference type="ChEBI" id="CHEBI:15377"/>
        <dbReference type="ChEBI" id="CHEBI:15378"/>
        <dbReference type="ChEBI" id="CHEBI:16120"/>
        <dbReference type="ChEBI" id="CHEBI:72998"/>
        <dbReference type="ChEBI" id="CHEBI:77890"/>
    </reaction>
    <physiologicalReaction direction="left-to-right" evidence="2">
        <dbReference type="Rhea" id="RHEA:40484"/>
    </physiologicalReaction>
</comment>
<comment type="catalytic activity">
    <reaction evidence="2">
        <text>1-hexadecanoyl-2-(9-oxononanoyl)-sn-glycero-3-phosphocholine + H2O = 9-oxononanoate + 1-hexadecanoyl-sn-glycero-3-phosphocholine + H(+)</text>
        <dbReference type="Rhea" id="RHEA:41179"/>
        <dbReference type="ChEBI" id="CHEBI:15377"/>
        <dbReference type="ChEBI" id="CHEBI:15378"/>
        <dbReference type="ChEBI" id="CHEBI:61042"/>
        <dbReference type="ChEBI" id="CHEBI:72998"/>
        <dbReference type="ChEBI" id="CHEBI:77812"/>
    </reaction>
    <physiologicalReaction direction="left-to-right" evidence="2">
        <dbReference type="Rhea" id="RHEA:41180"/>
    </physiologicalReaction>
</comment>
<comment type="catalytic activity">
    <reaction evidence="2">
        <text>1-hexadecanoyl-2-[9-hydroperoxy-(10E-octadecenoyl)]-sn-glycero-3-phosphocholine + H2O = 9-hydroperoxy-10E-octadecenoate + 1-hexadecanoyl-sn-glycero-3-phosphocholine + H(+)</text>
        <dbReference type="Rhea" id="RHEA:41151"/>
        <dbReference type="ChEBI" id="CHEBI:15377"/>
        <dbReference type="ChEBI" id="CHEBI:15378"/>
        <dbReference type="ChEBI" id="CHEBI:72998"/>
        <dbReference type="ChEBI" id="CHEBI:77753"/>
        <dbReference type="ChEBI" id="CHEBI:77754"/>
    </reaction>
    <physiologicalReaction direction="left-to-right" evidence="2">
        <dbReference type="Rhea" id="RHEA:41152"/>
    </physiologicalReaction>
</comment>
<comment type="catalytic activity">
    <reaction evidence="2">
        <text>1-hexadecanoyl-2-(10-hydroperoxy-8E-octadecenoyl)-sn-glycero-3-phosphocholine + H2O = 10-hydroperoxy-(8E)-octadecenoate + 1-hexadecanoyl-sn-glycero-3-phosphocholine + H(+)</text>
        <dbReference type="Rhea" id="RHEA:41155"/>
        <dbReference type="ChEBI" id="CHEBI:15377"/>
        <dbReference type="ChEBI" id="CHEBI:15378"/>
        <dbReference type="ChEBI" id="CHEBI:72998"/>
        <dbReference type="ChEBI" id="CHEBI:77749"/>
        <dbReference type="ChEBI" id="CHEBI:77755"/>
    </reaction>
    <physiologicalReaction direction="left-to-right" evidence="2">
        <dbReference type="Rhea" id="RHEA:41156"/>
    </physiologicalReaction>
</comment>
<comment type="subcellular location">
    <subcellularLocation>
        <location evidence="2">Secreted</location>
        <location evidence="2">Extracellular space</location>
    </subcellularLocation>
    <text evidence="2">Associates with both LDL and HDL particles in plasma. Mainly associates with pro-inflammatory electronegative LDL particles.</text>
</comment>
<comment type="tissue specificity">
    <text evidence="2">Plasma.</text>
</comment>
<comment type="PTM">
    <text evidence="2">N-glycosylated.</text>
</comment>
<comment type="similarity">
    <text evidence="5">Belongs to the AB hydrolase superfamily. Lipase family.</text>
</comment>
<sequence>MLPSKLHALFCLCTCLALVYPFDWQDLNPVAYIESPAWVSKIQALMAAANIGQSKIPRGNGSYSVGCTDLMFDYTNKGTFLRLYYPSQDDDHSDTLWIPNKEYFLGLSKFLGTHWLVGKIMGLFFGSMTTPAAWNAHLRTGEKYPLIIFSHGLGAFRTIYSAIGIDLASHGFIVAAVEHRDGSASSTYYFKDQSAVEIGNKSWLYLRTLKRGEEEFPLRNEQLRQRAKECSQALSLILDIDHGRPVTNVLDLEFDVEQLKDSIDRDKIAIIGHSFGGATVIQTLSEDQRFRCGIALDAWMFPVGDEVYSRIPQPLFFINSERFQYPSNIIRMKKCFLPDRERKMITIRGSVHQNFVDFTFATSKIIGYLFTLKGDIDSNVAISLSNKASLAFLQKHLGLQKDFDQWDSLVEGEDHNLIPGTNINTTNHQAILQNSTGIERPNLD</sequence>
<proteinExistence type="evidence at transcript level"/>
<keyword id="KW-0325">Glycoprotein</keyword>
<keyword id="KW-0345">HDL</keyword>
<keyword id="KW-0378">Hydrolase</keyword>
<keyword id="KW-0427">LDL</keyword>
<keyword id="KW-0442">Lipid degradation</keyword>
<keyword id="KW-0443">Lipid metabolism</keyword>
<keyword id="KW-0595">Phospholipid degradation</keyword>
<keyword id="KW-1208">Phospholipid metabolism</keyword>
<keyword id="KW-1185">Reference proteome</keyword>
<keyword id="KW-0964">Secreted</keyword>
<keyword id="KW-0732">Signal</keyword>
<dbReference type="EC" id="3.1.1.47" evidence="2"/>
<dbReference type="EMBL" id="U34247">
    <property type="protein sequence ID" value="AAC48483.1"/>
    <property type="molecule type" value="mRNA"/>
</dbReference>
<dbReference type="SMR" id="Q28017"/>
<dbReference type="FunCoup" id="Q28017">
    <property type="interactions" value="134"/>
</dbReference>
<dbReference type="STRING" id="9913.ENSBTAP00000025719"/>
<dbReference type="ChEMBL" id="CHEMBL2441"/>
<dbReference type="ESTHER" id="bovin-pafa">
    <property type="family name" value="PAF-Acetylhydrolase"/>
</dbReference>
<dbReference type="GlyCosmos" id="Q28017">
    <property type="glycosylation" value="4 sites, No reported glycans"/>
</dbReference>
<dbReference type="GlyGen" id="Q28017">
    <property type="glycosylation" value="4 sites"/>
</dbReference>
<dbReference type="PaxDb" id="9913-ENSBTAP00000025719"/>
<dbReference type="eggNOG" id="KOG3847">
    <property type="taxonomic scope" value="Eukaryota"/>
</dbReference>
<dbReference type="InParanoid" id="Q28017"/>
<dbReference type="OrthoDB" id="2363873at2759"/>
<dbReference type="Proteomes" id="UP000009136">
    <property type="component" value="Unplaced"/>
</dbReference>
<dbReference type="GO" id="GO:0034364">
    <property type="term" value="C:high-density lipoprotein particle"/>
    <property type="evidence" value="ECO:0000250"/>
    <property type="project" value="UniProtKB"/>
</dbReference>
<dbReference type="GO" id="GO:0034362">
    <property type="term" value="C:low-density lipoprotein particle"/>
    <property type="evidence" value="ECO:0000250"/>
    <property type="project" value="UniProtKB"/>
</dbReference>
<dbReference type="GO" id="GO:0003847">
    <property type="term" value="F:1-alkyl-2-acetylglycerophosphocholine esterase activity"/>
    <property type="evidence" value="ECO:0000250"/>
    <property type="project" value="UniProtKB"/>
</dbReference>
<dbReference type="GO" id="GO:0047499">
    <property type="term" value="F:calcium-independent phospholipase A2 activity"/>
    <property type="evidence" value="ECO:0000250"/>
    <property type="project" value="UniProtKB"/>
</dbReference>
<dbReference type="GO" id="GO:0034638">
    <property type="term" value="P:phosphatidylcholine catabolic process"/>
    <property type="evidence" value="ECO:0000250"/>
    <property type="project" value="UniProtKB"/>
</dbReference>
<dbReference type="GO" id="GO:0062234">
    <property type="term" value="P:platelet activating factor catabolic process"/>
    <property type="evidence" value="ECO:0000250"/>
    <property type="project" value="UniProtKB"/>
</dbReference>
<dbReference type="GO" id="GO:0046469">
    <property type="term" value="P:platelet activating factor metabolic process"/>
    <property type="evidence" value="ECO:0000250"/>
    <property type="project" value="UniProtKB"/>
</dbReference>
<dbReference type="FunFam" id="3.40.50.1820:FF:000062">
    <property type="entry name" value="Platelet-activating factor acetylhydrolase"/>
    <property type="match status" value="1"/>
</dbReference>
<dbReference type="Gene3D" id="3.40.50.1820">
    <property type="entry name" value="alpha/beta hydrolase"/>
    <property type="match status" value="1"/>
</dbReference>
<dbReference type="InterPro" id="IPR029058">
    <property type="entry name" value="AB_hydrolase_fold"/>
</dbReference>
<dbReference type="InterPro" id="IPR016715">
    <property type="entry name" value="PAF_acetylhydro_eukaryote"/>
</dbReference>
<dbReference type="PANTHER" id="PTHR10272">
    <property type="entry name" value="PLATELET-ACTIVATING FACTOR ACETYLHYDROLASE"/>
    <property type="match status" value="1"/>
</dbReference>
<dbReference type="PANTHER" id="PTHR10272:SF12">
    <property type="entry name" value="PLATELET-ACTIVATING FACTOR ACETYLHYDROLASE"/>
    <property type="match status" value="1"/>
</dbReference>
<dbReference type="Pfam" id="PF03403">
    <property type="entry name" value="PAF-AH_p_II"/>
    <property type="match status" value="1"/>
</dbReference>
<dbReference type="PIRSF" id="PIRSF018169">
    <property type="entry name" value="PAF_acetylhydrolase"/>
    <property type="match status" value="1"/>
</dbReference>
<dbReference type="SUPFAM" id="SSF53474">
    <property type="entry name" value="alpha/beta-Hydrolases"/>
    <property type="match status" value="1"/>
</dbReference>
<dbReference type="PROSITE" id="PS00120">
    <property type="entry name" value="LIPASE_SER"/>
    <property type="match status" value="1"/>
</dbReference>